<sequence>MATRTQARGAVVELLYAFESGNEEIKKIASSMLEEKKIKNNQLAFALSLFNGVLEKINEIDALIEPHLKDWDFKRLGSMEKAILRLGAYEIGFTPTQNPIIINECIELGKLYAEPNTPKFLNAILDSLSKKLAQKPLI</sequence>
<proteinExistence type="inferred from homology"/>
<feature type="chain" id="PRO_0000176546" description="Transcription antitermination protein NusB">
    <location>
        <begin position="1"/>
        <end position="138"/>
    </location>
</feature>
<keyword id="KW-0694">RNA-binding</keyword>
<keyword id="KW-0804">Transcription</keyword>
<keyword id="KW-0889">Transcription antitermination</keyword>
<keyword id="KW-0805">Transcription regulation</keyword>
<evidence type="ECO:0000255" key="1">
    <source>
        <dbReference type="HAMAP-Rule" id="MF_00073"/>
    </source>
</evidence>
<evidence type="ECO:0000305" key="2"/>
<organism>
    <name type="scientific">Helicobacter pylori (strain J99 / ATCC 700824)</name>
    <name type="common">Campylobacter pylori J99</name>
    <dbReference type="NCBI Taxonomy" id="85963"/>
    <lineage>
        <taxon>Bacteria</taxon>
        <taxon>Pseudomonadati</taxon>
        <taxon>Campylobacterota</taxon>
        <taxon>Epsilonproteobacteria</taxon>
        <taxon>Campylobacterales</taxon>
        <taxon>Helicobacteraceae</taxon>
        <taxon>Helicobacter</taxon>
    </lineage>
</organism>
<comment type="function">
    <text evidence="1">Involved in transcription antitermination. Required for transcription of ribosomal RNA (rRNA) genes. Binds specifically to the boxA antiterminator sequence of the ribosomal RNA (rrn) operons.</text>
</comment>
<comment type="similarity">
    <text evidence="1 2">Belongs to the NusB family.</text>
</comment>
<name>NUSB_HELPJ</name>
<reference key="1">
    <citation type="journal article" date="1999" name="Nature">
        <title>Genomic sequence comparison of two unrelated isolates of the human gastric pathogen Helicobacter pylori.</title>
        <authorList>
            <person name="Alm R.A."/>
            <person name="Ling L.-S.L."/>
            <person name="Moir D.T."/>
            <person name="King B.L."/>
            <person name="Brown E.D."/>
            <person name="Doig P.C."/>
            <person name="Smith D.R."/>
            <person name="Noonan B."/>
            <person name="Guild B.C."/>
            <person name="deJonge B.L."/>
            <person name="Carmel G."/>
            <person name="Tummino P.J."/>
            <person name="Caruso A."/>
            <person name="Uria-Nickelsen M."/>
            <person name="Mills D.M."/>
            <person name="Ives C."/>
            <person name="Gibson R."/>
            <person name="Merberg D."/>
            <person name="Mills S.D."/>
            <person name="Jiang Q."/>
            <person name="Taylor D.E."/>
            <person name="Vovis G.F."/>
            <person name="Trust T.J."/>
        </authorList>
    </citation>
    <scope>NUCLEOTIDE SEQUENCE [LARGE SCALE GENOMIC DNA]</scope>
    <source>
        <strain>J99 / ATCC 700824</strain>
    </source>
</reference>
<accession>Q9ZN57</accession>
<gene>
    <name evidence="1" type="primary">nusB</name>
    <name type="ordered locus">jhp_0001</name>
</gene>
<protein>
    <recommendedName>
        <fullName evidence="1">Transcription antitermination protein NusB</fullName>
    </recommendedName>
    <alternativeName>
        <fullName evidence="1">Antitermination factor NusB</fullName>
    </alternativeName>
</protein>
<dbReference type="EMBL" id="AE001439">
    <property type="protein sequence ID" value="AAD05585.1"/>
    <property type="molecule type" value="Genomic_DNA"/>
</dbReference>
<dbReference type="PIR" id="C71985">
    <property type="entry name" value="C71985"/>
</dbReference>
<dbReference type="RefSeq" id="WP_000235738.1">
    <property type="nucleotide sequence ID" value="NZ_CP011330.1"/>
</dbReference>
<dbReference type="SMR" id="Q9ZN57"/>
<dbReference type="KEGG" id="hpj:jhp_0001"/>
<dbReference type="PATRIC" id="fig|85963.30.peg.1044"/>
<dbReference type="eggNOG" id="COG0781">
    <property type="taxonomic scope" value="Bacteria"/>
</dbReference>
<dbReference type="Proteomes" id="UP000000804">
    <property type="component" value="Chromosome"/>
</dbReference>
<dbReference type="GO" id="GO:0005829">
    <property type="term" value="C:cytosol"/>
    <property type="evidence" value="ECO:0007669"/>
    <property type="project" value="TreeGrafter"/>
</dbReference>
<dbReference type="GO" id="GO:0003723">
    <property type="term" value="F:RNA binding"/>
    <property type="evidence" value="ECO:0007669"/>
    <property type="project" value="UniProtKB-UniRule"/>
</dbReference>
<dbReference type="GO" id="GO:0006353">
    <property type="term" value="P:DNA-templated transcription termination"/>
    <property type="evidence" value="ECO:0007669"/>
    <property type="project" value="UniProtKB-UniRule"/>
</dbReference>
<dbReference type="GO" id="GO:0031564">
    <property type="term" value="P:transcription antitermination"/>
    <property type="evidence" value="ECO:0007669"/>
    <property type="project" value="UniProtKB-KW"/>
</dbReference>
<dbReference type="CDD" id="cd00619">
    <property type="entry name" value="Terminator_NusB"/>
    <property type="match status" value="1"/>
</dbReference>
<dbReference type="FunFam" id="1.10.940.10:FF:000004">
    <property type="entry name" value="Transcription antitermination protein NusB"/>
    <property type="match status" value="1"/>
</dbReference>
<dbReference type="Gene3D" id="1.10.940.10">
    <property type="entry name" value="NusB-like"/>
    <property type="match status" value="1"/>
</dbReference>
<dbReference type="HAMAP" id="MF_00073">
    <property type="entry name" value="NusB"/>
    <property type="match status" value="1"/>
</dbReference>
<dbReference type="InterPro" id="IPR035926">
    <property type="entry name" value="NusB-like_sf"/>
</dbReference>
<dbReference type="InterPro" id="IPR011605">
    <property type="entry name" value="NusB_fam"/>
</dbReference>
<dbReference type="InterPro" id="IPR006027">
    <property type="entry name" value="NusB_RsmB_TIM44"/>
</dbReference>
<dbReference type="NCBIfam" id="TIGR01951">
    <property type="entry name" value="nusB"/>
    <property type="match status" value="1"/>
</dbReference>
<dbReference type="PANTHER" id="PTHR11078:SF3">
    <property type="entry name" value="ANTITERMINATION NUSB DOMAIN-CONTAINING PROTEIN"/>
    <property type="match status" value="1"/>
</dbReference>
<dbReference type="PANTHER" id="PTHR11078">
    <property type="entry name" value="N UTILIZATION SUBSTANCE PROTEIN B-RELATED"/>
    <property type="match status" value="1"/>
</dbReference>
<dbReference type="Pfam" id="PF01029">
    <property type="entry name" value="NusB"/>
    <property type="match status" value="1"/>
</dbReference>
<dbReference type="SUPFAM" id="SSF48013">
    <property type="entry name" value="NusB-like"/>
    <property type="match status" value="1"/>
</dbReference>